<name>RL14_CLOPE</name>
<comment type="function">
    <text evidence="1">Binds to 23S rRNA. Forms part of two intersubunit bridges in the 70S ribosome.</text>
</comment>
<comment type="subunit">
    <text evidence="1">Part of the 50S ribosomal subunit. Forms a cluster with proteins L3 and L19. In the 70S ribosome, L14 and L19 interact and together make contacts with the 16S rRNA in bridges B5 and B8.</text>
</comment>
<comment type="similarity">
    <text evidence="1">Belongs to the universal ribosomal protein uL14 family.</text>
</comment>
<reference key="1">
    <citation type="journal article" date="2002" name="Proc. Natl. Acad. Sci. U.S.A.">
        <title>Complete genome sequence of Clostridium perfringens, an anaerobic flesh-eater.</title>
        <authorList>
            <person name="Shimizu T."/>
            <person name="Ohtani K."/>
            <person name="Hirakawa H."/>
            <person name="Ohshima K."/>
            <person name="Yamashita A."/>
            <person name="Shiba T."/>
            <person name="Ogasawara N."/>
            <person name="Hattori M."/>
            <person name="Kuhara S."/>
            <person name="Hayashi H."/>
        </authorList>
    </citation>
    <scope>NUCLEOTIDE SEQUENCE [LARGE SCALE GENOMIC DNA]</scope>
    <source>
        <strain>13 / Type A</strain>
    </source>
</reference>
<proteinExistence type="inferred from homology"/>
<evidence type="ECO:0000255" key="1">
    <source>
        <dbReference type="HAMAP-Rule" id="MF_01367"/>
    </source>
</evidence>
<evidence type="ECO:0000305" key="2"/>
<sequence>MIQQQTLLKVADNSGAKEIMCIRVLGGSKRKFGNIGDVIVASVKSATPGGVVKKGEVVKAVIVRSVRGLRRADGSYIKFDENAAVIIKDDKQPRGTRIFGPVARELRDNEFNKILSLAPEVL</sequence>
<dbReference type="EMBL" id="BA000016">
    <property type="protein sequence ID" value="BAB82101.1"/>
    <property type="molecule type" value="Genomic_DNA"/>
</dbReference>
<dbReference type="RefSeq" id="WP_003454425.1">
    <property type="nucleotide sequence ID" value="NC_003366.1"/>
</dbReference>
<dbReference type="SMR" id="Q8XHT3"/>
<dbReference type="STRING" id="195102.gene:10491712"/>
<dbReference type="GeneID" id="93001019"/>
<dbReference type="KEGG" id="cpe:CPE2395"/>
<dbReference type="HOGENOM" id="CLU_095071_2_1_9"/>
<dbReference type="Proteomes" id="UP000000818">
    <property type="component" value="Chromosome"/>
</dbReference>
<dbReference type="GO" id="GO:0022625">
    <property type="term" value="C:cytosolic large ribosomal subunit"/>
    <property type="evidence" value="ECO:0007669"/>
    <property type="project" value="TreeGrafter"/>
</dbReference>
<dbReference type="GO" id="GO:0070180">
    <property type="term" value="F:large ribosomal subunit rRNA binding"/>
    <property type="evidence" value="ECO:0007669"/>
    <property type="project" value="TreeGrafter"/>
</dbReference>
<dbReference type="GO" id="GO:0003735">
    <property type="term" value="F:structural constituent of ribosome"/>
    <property type="evidence" value="ECO:0007669"/>
    <property type="project" value="InterPro"/>
</dbReference>
<dbReference type="GO" id="GO:0006412">
    <property type="term" value="P:translation"/>
    <property type="evidence" value="ECO:0007669"/>
    <property type="project" value="UniProtKB-UniRule"/>
</dbReference>
<dbReference type="CDD" id="cd00337">
    <property type="entry name" value="Ribosomal_uL14"/>
    <property type="match status" value="1"/>
</dbReference>
<dbReference type="FunFam" id="2.40.150.20:FF:000001">
    <property type="entry name" value="50S ribosomal protein L14"/>
    <property type="match status" value="1"/>
</dbReference>
<dbReference type="Gene3D" id="2.40.150.20">
    <property type="entry name" value="Ribosomal protein L14"/>
    <property type="match status" value="1"/>
</dbReference>
<dbReference type="HAMAP" id="MF_01367">
    <property type="entry name" value="Ribosomal_uL14"/>
    <property type="match status" value="1"/>
</dbReference>
<dbReference type="InterPro" id="IPR000218">
    <property type="entry name" value="Ribosomal_uL14"/>
</dbReference>
<dbReference type="InterPro" id="IPR005745">
    <property type="entry name" value="Ribosomal_uL14_bac-type"/>
</dbReference>
<dbReference type="InterPro" id="IPR019972">
    <property type="entry name" value="Ribosomal_uL14_CS"/>
</dbReference>
<dbReference type="InterPro" id="IPR036853">
    <property type="entry name" value="Ribosomal_uL14_sf"/>
</dbReference>
<dbReference type="NCBIfam" id="TIGR01067">
    <property type="entry name" value="rplN_bact"/>
    <property type="match status" value="1"/>
</dbReference>
<dbReference type="PANTHER" id="PTHR11761">
    <property type="entry name" value="50S/60S RIBOSOMAL PROTEIN L14/L23"/>
    <property type="match status" value="1"/>
</dbReference>
<dbReference type="PANTHER" id="PTHR11761:SF3">
    <property type="entry name" value="LARGE RIBOSOMAL SUBUNIT PROTEIN UL14M"/>
    <property type="match status" value="1"/>
</dbReference>
<dbReference type="Pfam" id="PF00238">
    <property type="entry name" value="Ribosomal_L14"/>
    <property type="match status" value="1"/>
</dbReference>
<dbReference type="SMART" id="SM01374">
    <property type="entry name" value="Ribosomal_L14"/>
    <property type="match status" value="1"/>
</dbReference>
<dbReference type="SUPFAM" id="SSF50193">
    <property type="entry name" value="Ribosomal protein L14"/>
    <property type="match status" value="1"/>
</dbReference>
<dbReference type="PROSITE" id="PS00049">
    <property type="entry name" value="RIBOSOMAL_L14"/>
    <property type="match status" value="1"/>
</dbReference>
<feature type="chain" id="PRO_1000055564" description="Large ribosomal subunit protein uL14">
    <location>
        <begin position="1"/>
        <end position="122"/>
    </location>
</feature>
<protein>
    <recommendedName>
        <fullName evidence="1">Large ribosomal subunit protein uL14</fullName>
    </recommendedName>
    <alternativeName>
        <fullName evidence="2">50S ribosomal protein L14</fullName>
    </alternativeName>
</protein>
<accession>Q8XHT3</accession>
<gene>
    <name evidence="1" type="primary">rplN</name>
    <name type="ordered locus">CPE2395</name>
</gene>
<organism>
    <name type="scientific">Clostridium perfringens (strain 13 / Type A)</name>
    <dbReference type="NCBI Taxonomy" id="195102"/>
    <lineage>
        <taxon>Bacteria</taxon>
        <taxon>Bacillati</taxon>
        <taxon>Bacillota</taxon>
        <taxon>Clostridia</taxon>
        <taxon>Eubacteriales</taxon>
        <taxon>Clostridiaceae</taxon>
        <taxon>Clostridium</taxon>
    </lineage>
</organism>
<keyword id="KW-1185">Reference proteome</keyword>
<keyword id="KW-0687">Ribonucleoprotein</keyword>
<keyword id="KW-0689">Ribosomal protein</keyword>
<keyword id="KW-0694">RNA-binding</keyword>
<keyword id="KW-0699">rRNA-binding</keyword>